<accession>P91820</accession>
<accession>Q564V2</accession>
<reference evidence="7" key="1">
    <citation type="journal article" date="1998" name="Science">
        <title>Genome sequence of the nematode C. elegans: a platform for investigating biology.</title>
        <authorList>
            <consortium name="The C. elegans sequencing consortium"/>
        </authorList>
    </citation>
    <scope>NUCLEOTIDE SEQUENCE [LARGE SCALE GENOMIC DNA]</scope>
    <source>
        <strain evidence="7">Bristol N2</strain>
    </source>
</reference>
<reference evidence="5" key="2">
    <citation type="journal article" date="2023" name="Nat. Commun.">
        <title>Intra- and inter-molecular regulation by intrinsically-disordered regions governs PUF protein RNA binding.</title>
        <authorList>
            <person name="Qiu C."/>
            <person name="Zhang Z."/>
            <person name="Wine R.N."/>
            <person name="Campbell Z.T."/>
            <person name="Zhang J."/>
            <person name="Hall T.M.T."/>
        </authorList>
    </citation>
    <scope>FUNCTION</scope>
    <scope>INTERACTION WITH FBF-2</scope>
    <scope>DOMAIN</scope>
</reference>
<reference evidence="10" key="3">
    <citation type="journal article" date="2019" name="Elife">
        <title>A crystal structure of a collaborative RNA regulatory complex reveals mechanisms to refine target specificity.</title>
        <authorList>
            <person name="Qiu C."/>
            <person name="Bhat V.D."/>
            <person name="Rajeev S."/>
            <person name="Zhang C."/>
            <person name="Lasley A.E."/>
            <person name="Wine R.N."/>
            <person name="Campbell Z.T."/>
            <person name="Hall T.M.T."/>
        </authorList>
    </citation>
    <scope>X-RAY CRYSTALLOGRAPHY (2.10 ANGSTROMS) OF 74-98 IN COMPLEX WITH FBF-2 164-575 AND RNA</scope>
    <scope>INTERACTION WITH FBF-2</scope>
    <scope>MUTAGENESIS OF LEU-76; LYS-80; LEU-83 AND TYR-85</scope>
</reference>
<reference evidence="11 12" key="4">
    <citation type="journal article" date="2022" name="Nucleic Acids Res.">
        <title>Bipartite interaction sites differentially modulate RNA-binding affinity of a protein complex essential for germline stem cell self-renewal.</title>
        <authorList>
            <person name="Qiu C."/>
            <person name="Wine R.N."/>
            <person name="Campbell Z.T."/>
            <person name="Hall T.M.T."/>
        </authorList>
    </citation>
    <scope>X-RAY CRYSTALLOGRAPHY (2.34 ANGSTROMS) OF 19-50 IN COMPLEX WITH FBF-2 164-575 AND RNA</scope>
    <scope>FUNCTION</scope>
    <scope>SUBUNIT</scope>
    <scope>INTERACTION WITH FBF-2</scope>
    <scope>DOMAIN</scope>
    <scope>MUTAGENESIS OF 76-LEU--GLN-79; 85-TYR--LYS-88 AND TYR-85</scope>
</reference>
<name>LST1_CAEEL</name>
<organism evidence="7">
    <name type="scientific">Caenorhabditis elegans</name>
    <dbReference type="NCBI Taxonomy" id="6239"/>
    <lineage>
        <taxon>Eukaryota</taxon>
        <taxon>Metazoa</taxon>
        <taxon>Ecdysozoa</taxon>
        <taxon>Nematoda</taxon>
        <taxon>Chromadorea</taxon>
        <taxon>Rhabditida</taxon>
        <taxon>Rhabditina</taxon>
        <taxon>Rhabditomorpha</taxon>
        <taxon>Rhabditoidea</taxon>
        <taxon>Rhabditidae</taxon>
        <taxon>Peloderinae</taxon>
        <taxon>Caenorhabditis</taxon>
    </lineage>
</organism>
<feature type="chain" id="PRO_0000461483" description="Lateral signaling target 1 protein">
    <location>
        <begin position="1"/>
        <end position="328"/>
    </location>
</feature>
<feature type="region of interest" description="Disordered" evidence="1">
    <location>
        <begin position="56"/>
        <end position="78"/>
    </location>
</feature>
<feature type="region of interest" description="Disordered" evidence="1">
    <location>
        <begin position="108"/>
        <end position="135"/>
    </location>
</feature>
<feature type="region of interest" description="Disordered" evidence="1">
    <location>
        <begin position="177"/>
        <end position="200"/>
    </location>
</feature>
<feature type="compositionally biased region" description="Polar residues" evidence="1">
    <location>
        <begin position="178"/>
        <end position="200"/>
    </location>
</feature>
<feature type="splice variant" id="VSP_062455" description="In isoform b.">
    <location>
        <begin position="1"/>
        <end position="94"/>
    </location>
</feature>
<feature type="mutagenesis site" description="N-terminal changes to the second KxxL motif have a minor effect on fbf-2 binding but abrogate the ability to modulate fbf-2 binding affinity to 8 and 9 nt target RNAs." evidence="3">
    <original>LRSQ</original>
    <variation>HEAP</variation>
    <location>
        <begin position="76"/>
        <end position="79"/>
    </location>
</feature>
<feature type="mutagenesis site" description="Does not affect binding to fbf-2." evidence="2">
    <original>L</original>
    <variation>A</variation>
    <variation>G</variation>
    <location>
        <position position="76"/>
    </location>
</feature>
<feature type="mutagenesis site" description="Does not affect binding to fbf-2." evidence="2">
    <original>K</original>
    <variation>A</variation>
    <location>
        <position position="80"/>
    </location>
</feature>
<feature type="mutagenesis site" description="Abolishes binding to fbf-2." evidence="2">
    <original>L</original>
    <variation>A</variation>
    <location>
        <position position="83"/>
    </location>
</feature>
<feature type="mutagenesis site" description="C-terminal changes to the second KxxL motif weaken fbf-2 binding by 30-fold but do not affect the ability to modulate fbf-2 binding affinity to 8 and 9 nt target RNAs." evidence="3">
    <original>YIEK</original>
    <variation>LRSE</variation>
    <location>
        <begin position="85"/>
        <end position="88"/>
    </location>
</feature>
<feature type="mutagenesis site" description="Abolishes binding to fbf-2." evidence="2">
    <original>Y</original>
    <variation>A</variation>
    <location>
        <position position="85"/>
    </location>
</feature>
<feature type="mutagenesis site" description="Weakens fbf-2 binding by 15-fold." evidence="3">
    <original>Y</original>
    <variation>L</variation>
    <location>
        <position position="85"/>
    </location>
</feature>
<keyword id="KW-0002">3D-structure</keyword>
<keyword id="KW-0025">Alternative splicing</keyword>
<keyword id="KW-1185">Reference proteome</keyword>
<sequence>MCSTFILPPRRNNCNKSSSTIAYSKSQHEAPKQLLQLRSEIKPLIPLNQPSNFWESSQDSGVLSSLSSSPQQRSGLRSQKLHLTYIEKNKRVRAMIPQQQHYHAFDRPTHYNSRKTSGPPPLMRTPSSGFSSASSSENMFSGLTLSDNENKIHEIMDPSVDVDLDMFLLPDCRYKQPVQPSTSTSRNNVSQISGSSRLNGSTRHVAPIVPKVAMPSELSYANVKRSSGYVDYMPTTYNSNVTSNSSAASVPMSPGTWVRCHYCWESYVKLCQRVANLEPLISCDGPWNWHTLYDMQGRVTCPRLWFAQLDRAGSEMVEQMGHARNVPV</sequence>
<protein>
    <recommendedName>
        <fullName evidence="5">Lateral signaling target 1 protein</fullName>
    </recommendedName>
</protein>
<evidence type="ECO:0000256" key="1">
    <source>
        <dbReference type="SAM" id="MobiDB-lite"/>
    </source>
</evidence>
<evidence type="ECO:0000269" key="2">
    <source>
    </source>
</evidence>
<evidence type="ECO:0000269" key="3">
    <source>
    </source>
</evidence>
<evidence type="ECO:0000269" key="4">
    <source>
    </source>
</evidence>
<evidence type="ECO:0000305" key="5"/>
<evidence type="ECO:0000305" key="6">
    <source>
    </source>
</evidence>
<evidence type="ECO:0000312" key="7">
    <source>
        <dbReference type="Proteomes" id="UP000001940"/>
    </source>
</evidence>
<evidence type="ECO:0000312" key="8">
    <source>
        <dbReference type="WormBase" id="T22A3.3a"/>
    </source>
</evidence>
<evidence type="ECO:0000312" key="9">
    <source>
        <dbReference type="WormBase" id="T22A3.3b"/>
    </source>
</evidence>
<evidence type="ECO:0007744" key="10">
    <source>
        <dbReference type="PDB" id="6PUN"/>
    </source>
</evidence>
<evidence type="ECO:0007744" key="11">
    <source>
        <dbReference type="PDB" id="7RZZ"/>
    </source>
</evidence>
<evidence type="ECO:0007744" key="12">
    <source>
        <dbReference type="PDB" id="7S02"/>
    </source>
</evidence>
<dbReference type="EMBL" id="BX284601">
    <property type="protein sequence ID" value="CAB03381.3"/>
    <property type="molecule type" value="Genomic_DNA"/>
</dbReference>
<dbReference type="EMBL" id="BX284601">
    <property type="protein sequence ID" value="CAI79225.1"/>
    <property type="molecule type" value="Genomic_DNA"/>
</dbReference>
<dbReference type="PIR" id="T25092">
    <property type="entry name" value="T25092"/>
</dbReference>
<dbReference type="RefSeq" id="NP_001021628.2">
    <molecule id="P91820-1"/>
    <property type="nucleotide sequence ID" value="NM_001026457.6"/>
</dbReference>
<dbReference type="RefSeq" id="NP_001021629.1">
    <property type="nucleotide sequence ID" value="NM_001026458.2"/>
</dbReference>
<dbReference type="RefSeq" id="NP_001379446.1">
    <molecule id="P91820-2"/>
    <property type="nucleotide sequence ID" value="NM_001392939.1"/>
</dbReference>
<dbReference type="PDB" id="6PUN">
    <property type="method" value="X-ray"/>
    <property type="resolution" value="2.10 A"/>
    <property type="chains" value="E/F=74-98"/>
</dbReference>
<dbReference type="PDB" id="7RZZ">
    <property type="method" value="X-ray"/>
    <property type="resolution" value="2.39 A"/>
    <property type="chains" value="C=18-50"/>
</dbReference>
<dbReference type="PDB" id="7S02">
    <property type="method" value="X-ray"/>
    <property type="resolution" value="2.34 A"/>
    <property type="chains" value="C=18-50"/>
</dbReference>
<dbReference type="PDBsum" id="6PUN"/>
<dbReference type="PDBsum" id="7RZZ"/>
<dbReference type="PDBsum" id="7S02"/>
<dbReference type="EMDB" id="EMD-45096"/>
<dbReference type="EMDB" id="EMD-45097"/>
<dbReference type="SMR" id="P91820"/>
<dbReference type="DIP" id="DIP-25421N"/>
<dbReference type="FunCoup" id="P91820">
    <property type="interactions" value="3"/>
</dbReference>
<dbReference type="IntAct" id="P91820">
    <property type="interactions" value="40"/>
</dbReference>
<dbReference type="MINT" id="P91820"/>
<dbReference type="STRING" id="6239.T22A3.3a.1"/>
<dbReference type="PaxDb" id="6239-T22A3-3a"/>
<dbReference type="EnsemblMetazoa" id="T22A3.3a.1">
    <molecule id="P91820-1"/>
    <property type="protein sequence ID" value="T22A3.3a.1"/>
    <property type="gene ID" value="WBGene00003083"/>
</dbReference>
<dbReference type="EnsemblMetazoa" id="T22A3.3b.1">
    <molecule id="P91820-2"/>
    <property type="protein sequence ID" value="T22A3.3b.1"/>
    <property type="gene ID" value="WBGene00003083"/>
</dbReference>
<dbReference type="EnsemblMetazoa" id="T22A3.3b.2">
    <molecule id="P91820-2"/>
    <property type="protein sequence ID" value="T22A3.3b.2"/>
    <property type="gene ID" value="WBGene00003083"/>
</dbReference>
<dbReference type="GeneID" id="172948"/>
<dbReference type="UCSC" id="T22A3.3a">
    <property type="organism name" value="c. elegans"/>
</dbReference>
<dbReference type="AGR" id="WB:WBGene00003083"/>
<dbReference type="WormBase" id="T22A3.3a">
    <property type="protein sequence ID" value="CE52562"/>
    <property type="gene ID" value="WBGene00003083"/>
    <property type="gene designation" value="lst-1"/>
</dbReference>
<dbReference type="WormBase" id="T22A3.3b">
    <property type="protein sequence ID" value="CE38421"/>
    <property type="gene ID" value="WBGene00003083"/>
    <property type="gene designation" value="lst-1"/>
</dbReference>
<dbReference type="eggNOG" id="ENOG502R0WP">
    <property type="taxonomic scope" value="Eukaryota"/>
</dbReference>
<dbReference type="HOGENOM" id="CLU_072673_0_0_1"/>
<dbReference type="InParanoid" id="P91820"/>
<dbReference type="OrthoDB" id="5787390at2759"/>
<dbReference type="Proteomes" id="UP000001940">
    <property type="component" value="Chromosome I"/>
</dbReference>
<dbReference type="Bgee" id="WBGene00003083">
    <property type="expression patterns" value="Expressed in embryo and 6 other cell types or tissues"/>
</dbReference>
<dbReference type="ExpressionAtlas" id="P91820">
    <property type="expression patterns" value="baseline and differential"/>
</dbReference>
<dbReference type="GO" id="GO:0001965">
    <property type="term" value="F:G-protein alpha-subunit binding"/>
    <property type="evidence" value="ECO:0000353"/>
    <property type="project" value="WormBase"/>
</dbReference>
<dbReference type="GO" id="GO:0010468">
    <property type="term" value="P:regulation of gene expression"/>
    <property type="evidence" value="ECO:0000316"/>
    <property type="project" value="UniProtKB"/>
</dbReference>
<gene>
    <name evidence="8" type="primary">lst-1</name>
    <name evidence="8" type="ORF">T22A3.3</name>
</gene>
<proteinExistence type="evidence at protein level"/>
<comment type="function">
    <text evidence="3 4 6">Plays a role in germline stem cell maintenance, perhaps acting in concert with mRNA-binding factor fbf-2 (Probable). May regulate fbf-2 by modulating RNA-binding and perhaps by competition with the intramolecular interaction between the fbf-2 RNA-binding domain and C-terminal tail (PubMed:34908132, PubMed:37953271).</text>
</comment>
<comment type="subunit">
    <text evidence="2 3 4">Interacts with fbf-2; the interaction probably mediates the release of the C-terminal tail of fbf-2 from the RNA-binding domain, thereby altering its RNA-binding affinity.</text>
</comment>
<comment type="alternative products">
    <event type="alternative splicing"/>
    <isoform>
        <id>P91820-1</id>
        <name evidence="8">a</name>
        <sequence type="displayed"/>
    </isoform>
    <isoform>
        <id>P91820-2</id>
        <name evidence="9">b</name>
        <sequence type="described" ref="VSP_062455"/>
    </isoform>
</comment>
<comment type="domain">
    <text evidence="3 4">Contains two Lys-Xaa-Xaa_Leu (KxxL) motifs, which are essential for the association with fbf-2.</text>
</comment>